<dbReference type="EMBL" id="D17584">
    <property type="protein sequence ID" value="BAA04508.1"/>
    <property type="molecule type" value="mRNA"/>
</dbReference>
<dbReference type="EMBL" id="M68908">
    <property type="protein sequence ID" value="AAA39969.1"/>
    <property type="molecule type" value="mRNA"/>
</dbReference>
<dbReference type="EMBL" id="M68909">
    <property type="protein sequence ID" value="AAA39970.1"/>
    <property type="molecule type" value="mRNA"/>
</dbReference>
<dbReference type="CCDS" id="CCDS19906.1">
    <molecule id="P41539-1"/>
</dbReference>
<dbReference type="CCDS" id="CCDS80486.1">
    <molecule id="P41539-2"/>
</dbReference>
<dbReference type="PIR" id="I52526">
    <property type="entry name" value="I52526"/>
</dbReference>
<dbReference type="RefSeq" id="NP_001297989.1">
    <molecule id="P41539-2"/>
    <property type="nucleotide sequence ID" value="NM_001311060.2"/>
</dbReference>
<dbReference type="RefSeq" id="NP_033337.1">
    <molecule id="P41539-1"/>
    <property type="nucleotide sequence ID" value="NM_009311.3"/>
</dbReference>
<dbReference type="RefSeq" id="XP_006505090.1">
    <molecule id="P41539-1"/>
    <property type="nucleotide sequence ID" value="XM_006505027.1"/>
</dbReference>
<dbReference type="BioGRID" id="203950">
    <property type="interactions" value="1"/>
</dbReference>
<dbReference type="FunCoup" id="P41539">
    <property type="interactions" value="526"/>
</dbReference>
<dbReference type="STRING" id="10090.ENSMUSP00000139347"/>
<dbReference type="BindingDB" id="P41539"/>
<dbReference type="iPTMnet" id="P41539"/>
<dbReference type="PhosphoSitePlus" id="P41539"/>
<dbReference type="jPOST" id="P41539"/>
<dbReference type="PaxDb" id="10090-ENSMUSP00000139347"/>
<dbReference type="ProteomicsDB" id="259105">
    <molecule id="P41539-1"/>
</dbReference>
<dbReference type="ProteomicsDB" id="259106">
    <molecule id="P41539-2"/>
</dbReference>
<dbReference type="ABCD" id="P41539">
    <property type="antibodies" value="1 sequenced antibody"/>
</dbReference>
<dbReference type="Antibodypedia" id="2784">
    <property type="antibodies" value="590 antibodies from 39 providers"/>
</dbReference>
<dbReference type="DNASU" id="21333"/>
<dbReference type="Ensembl" id="ENSMUST00000184986.2">
    <molecule id="P41539-2"/>
    <property type="protein sequence ID" value="ENSMUSP00000138818.2"/>
    <property type="gene ID" value="ENSMUSG00000061762.13"/>
</dbReference>
<dbReference type="Ensembl" id="ENSMUST00000185187.8">
    <molecule id="P41539-1"/>
    <property type="protein sequence ID" value="ENSMUSP00000139347.2"/>
    <property type="gene ID" value="ENSMUSG00000061762.13"/>
</dbReference>
<dbReference type="GeneID" id="21333"/>
<dbReference type="KEGG" id="mmu:21333"/>
<dbReference type="UCSC" id="uc009axc.1">
    <molecule id="P41539-1"/>
    <property type="organism name" value="mouse"/>
</dbReference>
<dbReference type="AGR" id="MGI:98474"/>
<dbReference type="CTD" id="6863"/>
<dbReference type="MGI" id="MGI:98474">
    <property type="gene designation" value="Tac1"/>
</dbReference>
<dbReference type="VEuPathDB" id="HostDB:ENSMUSG00000061762"/>
<dbReference type="eggNOG" id="ENOG502S1KJ">
    <property type="taxonomic scope" value="Eukaryota"/>
</dbReference>
<dbReference type="GeneTree" id="ENSGT00390000002457"/>
<dbReference type="HOGENOM" id="CLU_149426_0_0_1"/>
<dbReference type="InParanoid" id="P41539"/>
<dbReference type="OMA" id="GQMSHKR"/>
<dbReference type="OrthoDB" id="9936276at2759"/>
<dbReference type="PhylomeDB" id="P41539"/>
<dbReference type="TreeFam" id="TF333405"/>
<dbReference type="Reactome" id="R-MMU-380095">
    <property type="pathway name" value="Tachykinin receptors bind tachykinins"/>
</dbReference>
<dbReference type="Reactome" id="R-MMU-416476">
    <property type="pathway name" value="G alpha (q) signalling events"/>
</dbReference>
<dbReference type="BioGRID-ORCS" id="21333">
    <property type="hits" value="0 hits in 77 CRISPR screens"/>
</dbReference>
<dbReference type="ChiTaRS" id="Tac2">
    <property type="organism name" value="mouse"/>
</dbReference>
<dbReference type="PRO" id="PR:P41539"/>
<dbReference type="Proteomes" id="UP000000589">
    <property type="component" value="Chromosome 6"/>
</dbReference>
<dbReference type="RNAct" id="P41539">
    <property type="molecule type" value="protein"/>
</dbReference>
<dbReference type="Bgee" id="ENSMUSG00000061762">
    <property type="expression patterns" value="Expressed in olfactory tubercle and 167 other cell types or tissues"/>
</dbReference>
<dbReference type="ExpressionAtlas" id="P41539">
    <property type="expression patterns" value="baseline and differential"/>
</dbReference>
<dbReference type="GO" id="GO:0030424">
    <property type="term" value="C:axon"/>
    <property type="evidence" value="ECO:0000314"/>
    <property type="project" value="MGI"/>
</dbReference>
<dbReference type="GO" id="GO:0005576">
    <property type="term" value="C:extracellular region"/>
    <property type="evidence" value="ECO:0000314"/>
    <property type="project" value="MGI"/>
</dbReference>
<dbReference type="GO" id="GO:0005615">
    <property type="term" value="C:extracellular space"/>
    <property type="evidence" value="ECO:0007669"/>
    <property type="project" value="Ensembl"/>
</dbReference>
<dbReference type="GO" id="GO:0043025">
    <property type="term" value="C:neuronal cell body"/>
    <property type="evidence" value="ECO:0000314"/>
    <property type="project" value="MGI"/>
</dbReference>
<dbReference type="GO" id="GO:0098992">
    <property type="term" value="C:neuronal dense core vesicle"/>
    <property type="evidence" value="ECO:0007669"/>
    <property type="project" value="Ensembl"/>
</dbReference>
<dbReference type="GO" id="GO:0045202">
    <property type="term" value="C:synapse"/>
    <property type="evidence" value="ECO:0007669"/>
    <property type="project" value="GOC"/>
</dbReference>
<dbReference type="GO" id="GO:0031835">
    <property type="term" value="F:substance P receptor binding"/>
    <property type="evidence" value="ECO:0007669"/>
    <property type="project" value="Ensembl"/>
</dbReference>
<dbReference type="GO" id="GO:0008306">
    <property type="term" value="P:associative learning"/>
    <property type="evidence" value="ECO:0007669"/>
    <property type="project" value="Ensembl"/>
</dbReference>
<dbReference type="GO" id="GO:1990090">
    <property type="term" value="P:cellular response to nerve growth factor stimulus"/>
    <property type="evidence" value="ECO:0000314"/>
    <property type="project" value="MGI"/>
</dbReference>
<dbReference type="GO" id="GO:0007268">
    <property type="term" value="P:chemical synaptic transmission"/>
    <property type="evidence" value="ECO:0007669"/>
    <property type="project" value="UniProtKB-KW"/>
</dbReference>
<dbReference type="GO" id="GO:0006954">
    <property type="term" value="P:inflammatory response"/>
    <property type="evidence" value="ECO:0000314"/>
    <property type="project" value="MGI"/>
</dbReference>
<dbReference type="GO" id="GO:0007616">
    <property type="term" value="P:long-term memory"/>
    <property type="evidence" value="ECO:0007669"/>
    <property type="project" value="Ensembl"/>
</dbReference>
<dbReference type="GO" id="GO:0010459">
    <property type="term" value="P:negative regulation of heart rate"/>
    <property type="evidence" value="ECO:0007669"/>
    <property type="project" value="Ensembl"/>
</dbReference>
<dbReference type="GO" id="GO:0007218">
    <property type="term" value="P:neuropeptide signaling pathway"/>
    <property type="evidence" value="ECO:0007669"/>
    <property type="project" value="UniProtKB-KW"/>
</dbReference>
<dbReference type="GO" id="GO:0045760">
    <property type="term" value="P:positive regulation of action potential"/>
    <property type="evidence" value="ECO:0007669"/>
    <property type="project" value="Ensembl"/>
</dbReference>
<dbReference type="GO" id="GO:0002675">
    <property type="term" value="P:positive regulation of acute inflammatory response"/>
    <property type="evidence" value="ECO:0007669"/>
    <property type="project" value="Ensembl"/>
</dbReference>
<dbReference type="GO" id="GO:2000854">
    <property type="term" value="P:positive regulation of corticosterone secretion"/>
    <property type="evidence" value="ECO:0007669"/>
    <property type="project" value="Ensembl"/>
</dbReference>
<dbReference type="GO" id="GO:0007204">
    <property type="term" value="P:positive regulation of cytosolic calcium ion concentration"/>
    <property type="evidence" value="ECO:0007669"/>
    <property type="project" value="Ensembl"/>
</dbReference>
<dbReference type="GO" id="GO:0010634">
    <property type="term" value="P:positive regulation of epithelial cell migration"/>
    <property type="evidence" value="ECO:0007669"/>
    <property type="project" value="Ensembl"/>
</dbReference>
<dbReference type="GO" id="GO:0050671">
    <property type="term" value="P:positive regulation of lymphocyte proliferation"/>
    <property type="evidence" value="ECO:0007669"/>
    <property type="project" value="Ensembl"/>
</dbReference>
<dbReference type="GO" id="GO:0045778">
    <property type="term" value="P:positive regulation of ossification"/>
    <property type="evidence" value="ECO:0007669"/>
    <property type="project" value="Ensembl"/>
</dbReference>
<dbReference type="GO" id="GO:0051496">
    <property type="term" value="P:positive regulation of stress fiber assembly"/>
    <property type="evidence" value="ECO:0007669"/>
    <property type="project" value="Ensembl"/>
</dbReference>
<dbReference type="GO" id="GO:0032224">
    <property type="term" value="P:positive regulation of synaptic transmission, cholinergic"/>
    <property type="evidence" value="ECO:0007669"/>
    <property type="project" value="Ensembl"/>
</dbReference>
<dbReference type="GO" id="GO:0032230">
    <property type="term" value="P:positive regulation of synaptic transmission, GABAergic"/>
    <property type="evidence" value="ECO:0007669"/>
    <property type="project" value="Ensembl"/>
</dbReference>
<dbReference type="GO" id="GO:0008217">
    <property type="term" value="P:regulation of blood pressure"/>
    <property type="evidence" value="ECO:0007669"/>
    <property type="project" value="Ensembl"/>
</dbReference>
<dbReference type="GO" id="GO:0009725">
    <property type="term" value="P:response to hormone"/>
    <property type="evidence" value="ECO:0007669"/>
    <property type="project" value="Ensembl"/>
</dbReference>
<dbReference type="GO" id="GO:0032496">
    <property type="term" value="P:response to lipopolysaccharide"/>
    <property type="evidence" value="ECO:0007669"/>
    <property type="project" value="Ensembl"/>
</dbReference>
<dbReference type="GO" id="GO:0048265">
    <property type="term" value="P:response to pain"/>
    <property type="evidence" value="ECO:0000315"/>
    <property type="project" value="MGI"/>
</dbReference>
<dbReference type="GO" id="GO:0019233">
    <property type="term" value="P:sensory perception of pain"/>
    <property type="evidence" value="ECO:0000315"/>
    <property type="project" value="MGI"/>
</dbReference>
<dbReference type="GO" id="GO:0007217">
    <property type="term" value="P:tachykinin receptor signaling pathway"/>
    <property type="evidence" value="ECO:0007669"/>
    <property type="project" value="InterPro"/>
</dbReference>
<dbReference type="InterPro" id="IPR013055">
    <property type="entry name" value="Tachy_Neuro_lke_CS"/>
</dbReference>
<dbReference type="InterPro" id="IPR008215">
    <property type="entry name" value="Tachykinin_dom"/>
</dbReference>
<dbReference type="InterPro" id="IPR008216">
    <property type="entry name" value="Tachykinin_fam"/>
</dbReference>
<dbReference type="PANTHER" id="PTHR11250:SF3">
    <property type="entry name" value="PROTACHYKININ-1"/>
    <property type="match status" value="1"/>
</dbReference>
<dbReference type="PANTHER" id="PTHR11250">
    <property type="entry name" value="TACHYKININ"/>
    <property type="match status" value="1"/>
</dbReference>
<dbReference type="Pfam" id="PF02202">
    <property type="entry name" value="Tachykinin"/>
    <property type="match status" value="1"/>
</dbReference>
<dbReference type="PRINTS" id="PR01829">
    <property type="entry name" value="PROTACHYKNIN"/>
</dbReference>
<dbReference type="SMART" id="SM00203">
    <property type="entry name" value="TK"/>
    <property type="match status" value="2"/>
</dbReference>
<dbReference type="PROSITE" id="PS00267">
    <property type="entry name" value="TACHYKININ"/>
    <property type="match status" value="2"/>
</dbReference>
<feature type="signal peptide" evidence="3">
    <location>
        <begin position="1"/>
        <end position="19"/>
    </location>
</feature>
<feature type="propeptide" id="PRO_0000033543" evidence="3">
    <location>
        <begin position="20"/>
        <end position="56"/>
    </location>
</feature>
<feature type="peptide" id="PRO_0000033544" description="Substance P">
    <location>
        <begin position="58"/>
        <end position="68"/>
    </location>
</feature>
<feature type="peptide" id="PRO_0000033545" description="Neuropeptide K">
    <location>
        <begin position="72"/>
        <end position="107"/>
    </location>
</feature>
<feature type="peptide" id="PRO_0000033546" description="Neuropeptide gamma, 1st part">
    <location>
        <begin position="72"/>
        <end position="73"/>
    </location>
</feature>
<feature type="peptide" id="PRO_0000033547" description="Neuropeptide gamma, 2nd part">
    <location>
        <begin position="89"/>
        <end position="107"/>
    </location>
</feature>
<feature type="peptide" id="PRO_0000033548" description="Neurokinin A">
    <location>
        <begin position="98"/>
        <end position="107"/>
    </location>
</feature>
<feature type="peptide" id="PRO_0000033549" description="C-terminal-flanking peptide" evidence="1">
    <location>
        <begin position="111"/>
        <end position="126"/>
    </location>
</feature>
<feature type="site" description="Cleavage; by FAP" evidence="2">
    <location>
        <begin position="59"/>
        <end position="60"/>
    </location>
</feature>
<feature type="site" description="Cleavage; by MME" evidence="2">
    <location>
        <begin position="63"/>
        <end position="64"/>
    </location>
</feature>
<feature type="site" description="Cleavage; by MME" evidence="2">
    <location>
        <begin position="64"/>
        <end position="65"/>
    </location>
</feature>
<feature type="site" description="Cleavage; by ACE" evidence="2">
    <location>
        <begin position="65"/>
        <end position="66"/>
    </location>
</feature>
<feature type="site" description="Cleavage; by ACE and MME" evidence="2">
    <location>
        <begin position="66"/>
        <end position="67"/>
    </location>
</feature>
<feature type="modified residue" description="Methionine amide" evidence="2">
    <location>
        <position position="68"/>
    </location>
</feature>
<feature type="modified residue" description="Methionine amide" evidence="2">
    <location>
        <position position="107"/>
    </location>
</feature>
<feature type="splice variant" id="VSP_006379" description="In isoform Gamma." evidence="4">
    <location>
        <begin position="74"/>
        <end position="88"/>
    </location>
</feature>
<accession>P41539</accession>
<accession>Q00073</accession>
<comment type="function">
    <text>Tachykinins are active peptides which excite neurons, evoke behavioral responses, are potent vasodilators and secretagogues, and contract (directly or indirectly) many smooth muscles.</text>
</comment>
<comment type="subcellular location">
    <subcellularLocation>
        <location>Secreted</location>
    </subcellularLocation>
</comment>
<comment type="alternative products">
    <event type="alternative splicing"/>
    <isoform>
        <id>P41539-1</id>
        <name>Beta</name>
        <sequence type="displayed"/>
    </isoform>
    <isoform>
        <id>P41539-3</id>
        <name>Alpha</name>
        <sequence type="not described"/>
    </isoform>
    <isoform>
        <id>P41539-2</id>
        <name>Gamma</name>
        <sequence type="described" ref="VSP_006379"/>
    </isoform>
    <isoform>
        <id>P41539-4</id>
        <name>Delta</name>
        <sequence type="not described"/>
    </isoform>
</comment>
<comment type="PTM">
    <molecule>Substance P</molecule>
    <text evidence="2">The substance P form is cleaved at Pro-59 by the prolyl endopeptidase FAP (seprase) activity (in vitro). Substance P is also cleaved and degraded by Angiotensin-converting enzyme (ACE) and neprilysin (MME).</text>
</comment>
<comment type="similarity">
    <text evidence="5">Belongs to the tachykinin family.</text>
</comment>
<reference key="1">
    <citation type="journal article" date="1993" name="Biomed. Res.">
        <title>Cloning and sequence analysis of mouse cDNAs encoding preprotachykinin A and B.</title>
        <authorList>
            <person name="Kako K."/>
            <person name="Munekata E."/>
            <person name="Hosaka M."/>
            <person name="Murakami K."/>
            <person name="Nakayama K."/>
        </authorList>
    </citation>
    <scope>NUCLEOTIDE SEQUENCE [MRNA] (ISOFORM BETA)</scope>
    <source>
        <strain>ICR</strain>
        <tissue>Brain</tissue>
    </source>
</reference>
<reference key="2">
    <citation type="journal article" date="1991" name="Endocrinology">
        <title>Tachykinin (substance-P) gene expression in Leydig cells of the human and mouse testis.</title>
        <authorList>
            <person name="Chiwakata C."/>
            <person name="Brackmann B."/>
            <person name="Hunt N."/>
            <person name="Davidoff M."/>
            <person name="Schulze W."/>
            <person name="Ivell R."/>
        </authorList>
    </citation>
    <scope>NUCLEOTIDE SEQUENCE [MRNA] OF 36-122 (ISOFORMS BETA AND GAMMA)</scope>
    <source>
        <tissue>Brain</tissue>
    </source>
</reference>
<organism>
    <name type="scientific">Mus musculus</name>
    <name type="common">Mouse</name>
    <dbReference type="NCBI Taxonomy" id="10090"/>
    <lineage>
        <taxon>Eukaryota</taxon>
        <taxon>Metazoa</taxon>
        <taxon>Chordata</taxon>
        <taxon>Craniata</taxon>
        <taxon>Vertebrata</taxon>
        <taxon>Euteleostomi</taxon>
        <taxon>Mammalia</taxon>
        <taxon>Eutheria</taxon>
        <taxon>Euarchontoglires</taxon>
        <taxon>Glires</taxon>
        <taxon>Rodentia</taxon>
        <taxon>Myomorpha</taxon>
        <taxon>Muroidea</taxon>
        <taxon>Muridae</taxon>
        <taxon>Murinae</taxon>
        <taxon>Mus</taxon>
        <taxon>Mus</taxon>
    </lineage>
</organism>
<evidence type="ECO:0000250" key="1"/>
<evidence type="ECO:0000250" key="2">
    <source>
        <dbReference type="UniProtKB" id="P20366"/>
    </source>
</evidence>
<evidence type="ECO:0000255" key="3"/>
<evidence type="ECO:0000303" key="4">
    <source>
    </source>
</evidence>
<evidence type="ECO:0000305" key="5"/>
<name>TKN1_MOUSE</name>
<protein>
    <recommendedName>
        <fullName>Protachykinin-1</fullName>
    </recommendedName>
    <alternativeName>
        <fullName>PPT</fullName>
    </alternativeName>
    <component>
        <recommendedName>
            <fullName>Substance P</fullName>
        </recommendedName>
    </component>
    <component>
        <recommendedName>
            <fullName>Neurokinin A</fullName>
            <shortName>NKA</shortName>
        </recommendedName>
        <alternativeName>
            <fullName>Neuromedin L</fullName>
        </alternativeName>
        <alternativeName>
            <fullName>Substance K</fullName>
        </alternativeName>
    </component>
    <component>
        <recommendedName>
            <fullName>Neuropeptide K</fullName>
            <shortName>NPK</shortName>
        </recommendedName>
    </component>
    <component>
        <recommendedName>
            <fullName>Neuropeptide gamma</fullName>
        </recommendedName>
    </component>
    <component>
        <recommendedName>
            <fullName>C-terminal-flanking peptide</fullName>
        </recommendedName>
    </component>
</protein>
<keyword id="KW-0025">Alternative splicing</keyword>
<keyword id="KW-0027">Amidation</keyword>
<keyword id="KW-0165">Cleavage on pair of basic residues</keyword>
<keyword id="KW-0527">Neuropeptide</keyword>
<keyword id="KW-0529">Neurotransmitter</keyword>
<keyword id="KW-1185">Reference proteome</keyword>
<keyword id="KW-0964">Secreted</keyword>
<keyword id="KW-0732">Signal</keyword>
<sequence>MKILVAVAVFFLVSTQLFAEEIDANDDLNYWSDWSDSDQIKEAMPEPFEHLLQRIARRPKPQQFFGLMGKRDADSSVEKQVALLKALYGHGQISHKRHKTDSFVGLMGKRALNSVAYERSAMQNYERRRK</sequence>
<gene>
    <name type="primary">Tac1</name>
    <name type="synonym">Nka</name>
    <name type="synonym">Nkna</name>
    <name type="synonym">Tac2</name>
</gene>
<proteinExistence type="evidence at transcript level"/>